<protein>
    <recommendedName>
        <fullName>Protein-L-isoaspartate O-methyltransferase</fullName>
        <ecNumber>2.1.1.77</ecNumber>
    </recommendedName>
    <alternativeName>
        <fullName>L-isoaspartyl protein carboxyl methyltransferase</fullName>
    </alternativeName>
    <alternativeName>
        <fullName>Protein L-isoaspartyl methyltransferase</fullName>
    </alternativeName>
    <alternativeName>
        <fullName>Protein-beta-aspartate methyltransferase</fullName>
        <shortName>PIMT</shortName>
    </alternativeName>
</protein>
<organism>
    <name type="scientific">Pyrococcus furiosus (strain ATCC 43587 / DSM 3638 / JCM 8422 / Vc1)</name>
    <dbReference type="NCBI Taxonomy" id="186497"/>
    <lineage>
        <taxon>Archaea</taxon>
        <taxon>Methanobacteriati</taxon>
        <taxon>Methanobacteriota</taxon>
        <taxon>Thermococci</taxon>
        <taxon>Thermococcales</taxon>
        <taxon>Thermococcaceae</taxon>
        <taxon>Pyrococcus</taxon>
    </lineage>
</organism>
<comment type="function">
    <text evidence="1">Catalyzes the methyl esterification of L-isoaspartyl residues in peptides and proteins that result from spontaneous decomposition of normal L-aspartyl and L-asparaginyl residues. It plays a role in the repair and/or degradation of damaged proteins (By similarity).</text>
</comment>
<comment type="catalytic activity">
    <reaction>
        <text>[protein]-L-isoaspartate + S-adenosyl-L-methionine = [protein]-L-isoaspartate alpha-methyl ester + S-adenosyl-L-homocysteine</text>
        <dbReference type="Rhea" id="RHEA:12705"/>
        <dbReference type="Rhea" id="RHEA-COMP:12143"/>
        <dbReference type="Rhea" id="RHEA-COMP:12144"/>
        <dbReference type="ChEBI" id="CHEBI:57856"/>
        <dbReference type="ChEBI" id="CHEBI:59789"/>
        <dbReference type="ChEBI" id="CHEBI:90596"/>
        <dbReference type="ChEBI" id="CHEBI:90598"/>
        <dbReference type="EC" id="2.1.1.77"/>
    </reaction>
</comment>
<comment type="subunit">
    <text>Monomer.</text>
</comment>
<comment type="subcellular location">
    <subcellularLocation>
        <location evidence="1">Cytoplasm</location>
    </subcellularLocation>
</comment>
<comment type="similarity">
    <text evidence="2">Belongs to the methyltransferase superfamily. L-isoaspartyl/D-aspartyl protein methyltransferase family.</text>
</comment>
<comment type="sequence caution" evidence="2">
    <conflict type="erroneous initiation">
        <sequence resource="EMBL-CDS" id="AAL82046"/>
    </conflict>
</comment>
<gene>
    <name type="primary">pcm</name>
    <name type="ordered locus">PF1922</name>
</gene>
<reference key="1">
    <citation type="journal article" date="1999" name="Genetics">
        <title>Divergence of the hyperthermophilic archaea Pyrococcus furiosus and P. horikoshii inferred from complete genomic sequences.</title>
        <authorList>
            <person name="Maeder D.L."/>
            <person name="Weiss R.B."/>
            <person name="Dunn D.M."/>
            <person name="Cherry J.L."/>
            <person name="Gonzalez J.M."/>
            <person name="DiRuggiero J."/>
            <person name="Robb F.T."/>
        </authorList>
    </citation>
    <scope>NUCLEOTIDE SEQUENCE [LARGE SCALE GENOMIC DNA]</scope>
    <source>
        <strain>ATCC 43587 / DSM 3638 / JCM 8422 / Vc1</strain>
    </source>
</reference>
<reference key="2">
    <citation type="journal article" date="2001" name="J. Mol. Biol.">
        <title>Crystal structure of a protein repair methyltransferase from Pyrococcus furiosus with its L-isoaspartyl peptide substrate.</title>
        <authorList>
            <person name="Griffith S.C."/>
            <person name="Sawaya M.R."/>
            <person name="Boutz D.R."/>
            <person name="Thapar N."/>
            <person name="Katz J.E."/>
            <person name="Clarke S."/>
            <person name="Yeates T.O."/>
        </authorList>
    </citation>
    <scope>X-RAY CRYSTALLOGRAPHY (1.2 ANGSTROMS)</scope>
</reference>
<proteinExistence type="evidence at protein level"/>
<dbReference type="EC" id="2.1.1.77"/>
<dbReference type="EMBL" id="AE009950">
    <property type="protein sequence ID" value="AAL82046.1"/>
    <property type="status" value="ALT_INIT"/>
    <property type="molecule type" value="Genomic_DNA"/>
</dbReference>
<dbReference type="PDB" id="1JG1">
    <property type="method" value="X-ray"/>
    <property type="resolution" value="1.20 A"/>
    <property type="chains" value="A=1-219"/>
</dbReference>
<dbReference type="PDB" id="1JG2">
    <property type="method" value="X-ray"/>
    <property type="resolution" value="1.50 A"/>
    <property type="chains" value="A=1-219"/>
</dbReference>
<dbReference type="PDB" id="1JG3">
    <property type="method" value="X-ray"/>
    <property type="resolution" value="2.10 A"/>
    <property type="chains" value="A/B=1-219"/>
</dbReference>
<dbReference type="PDB" id="1JG4">
    <property type="method" value="X-ray"/>
    <property type="resolution" value="1.50 A"/>
    <property type="chains" value="A=1-219"/>
</dbReference>
<dbReference type="PDBsum" id="1JG1"/>
<dbReference type="PDBsum" id="1JG2"/>
<dbReference type="PDBsum" id="1JG3"/>
<dbReference type="PDBsum" id="1JG4"/>
<dbReference type="SMR" id="Q8TZR3"/>
<dbReference type="STRING" id="186497.PF1922"/>
<dbReference type="PaxDb" id="186497-PF1922"/>
<dbReference type="KEGG" id="pfu:PF1922"/>
<dbReference type="PATRIC" id="fig|186497.12.peg.1993"/>
<dbReference type="eggNOG" id="arCOG00976">
    <property type="taxonomic scope" value="Archaea"/>
</dbReference>
<dbReference type="HOGENOM" id="CLU_055432_2_0_2"/>
<dbReference type="PhylomeDB" id="Q8TZR3"/>
<dbReference type="BRENDA" id="2.1.1.77">
    <property type="organism ID" value="5243"/>
</dbReference>
<dbReference type="EvolutionaryTrace" id="Q8TZR3"/>
<dbReference type="Proteomes" id="UP000001013">
    <property type="component" value="Chromosome"/>
</dbReference>
<dbReference type="GO" id="GO:0005737">
    <property type="term" value="C:cytoplasm"/>
    <property type="evidence" value="ECO:0007669"/>
    <property type="project" value="UniProtKB-SubCell"/>
</dbReference>
<dbReference type="GO" id="GO:0004719">
    <property type="term" value="F:protein-L-isoaspartate (D-aspartate) O-methyltransferase activity"/>
    <property type="evidence" value="ECO:0007669"/>
    <property type="project" value="UniProtKB-UniRule"/>
</dbReference>
<dbReference type="GO" id="GO:0032259">
    <property type="term" value="P:methylation"/>
    <property type="evidence" value="ECO:0007669"/>
    <property type="project" value="UniProtKB-KW"/>
</dbReference>
<dbReference type="GO" id="GO:0036211">
    <property type="term" value="P:protein modification process"/>
    <property type="evidence" value="ECO:0007669"/>
    <property type="project" value="UniProtKB-UniRule"/>
</dbReference>
<dbReference type="GO" id="GO:0030091">
    <property type="term" value="P:protein repair"/>
    <property type="evidence" value="ECO:0007669"/>
    <property type="project" value="UniProtKB-UniRule"/>
</dbReference>
<dbReference type="CDD" id="cd02440">
    <property type="entry name" value="AdoMet_MTases"/>
    <property type="match status" value="1"/>
</dbReference>
<dbReference type="FunFam" id="3.40.50.150:FF:000010">
    <property type="entry name" value="Protein-L-isoaspartate O-methyltransferase"/>
    <property type="match status" value="1"/>
</dbReference>
<dbReference type="Gene3D" id="3.40.50.150">
    <property type="entry name" value="Vaccinia Virus protein VP39"/>
    <property type="match status" value="1"/>
</dbReference>
<dbReference type="HAMAP" id="MF_00090">
    <property type="entry name" value="PIMT"/>
    <property type="match status" value="1"/>
</dbReference>
<dbReference type="InterPro" id="IPR000682">
    <property type="entry name" value="PCMT"/>
</dbReference>
<dbReference type="InterPro" id="IPR029063">
    <property type="entry name" value="SAM-dependent_MTases_sf"/>
</dbReference>
<dbReference type="NCBIfam" id="TIGR00080">
    <property type="entry name" value="pimt"/>
    <property type="match status" value="1"/>
</dbReference>
<dbReference type="NCBIfam" id="NF001453">
    <property type="entry name" value="PRK00312.1"/>
    <property type="match status" value="1"/>
</dbReference>
<dbReference type="PANTHER" id="PTHR11579">
    <property type="entry name" value="PROTEIN-L-ISOASPARTATE O-METHYLTRANSFERASE"/>
    <property type="match status" value="1"/>
</dbReference>
<dbReference type="PANTHER" id="PTHR11579:SF0">
    <property type="entry name" value="PROTEIN-L-ISOASPARTATE(D-ASPARTATE) O-METHYLTRANSFERASE"/>
    <property type="match status" value="1"/>
</dbReference>
<dbReference type="Pfam" id="PF01135">
    <property type="entry name" value="PCMT"/>
    <property type="match status" value="1"/>
</dbReference>
<dbReference type="SUPFAM" id="SSF53335">
    <property type="entry name" value="S-adenosyl-L-methionine-dependent methyltransferases"/>
    <property type="match status" value="1"/>
</dbReference>
<dbReference type="PROSITE" id="PS01279">
    <property type="entry name" value="PCMT"/>
    <property type="match status" value="1"/>
</dbReference>
<name>PIMT_PYRFU</name>
<evidence type="ECO:0000250" key="1"/>
<evidence type="ECO:0000305" key="2"/>
<evidence type="ECO:0007829" key="3">
    <source>
        <dbReference type="PDB" id="1JG1"/>
    </source>
</evidence>
<evidence type="ECO:0007829" key="4">
    <source>
        <dbReference type="PDB" id="1JG3"/>
    </source>
</evidence>
<evidence type="ECO:0007829" key="5">
    <source>
        <dbReference type="PDB" id="1JG4"/>
    </source>
</evidence>
<keyword id="KW-0002">3D-structure</keyword>
<keyword id="KW-0963">Cytoplasm</keyword>
<keyword id="KW-0489">Methyltransferase</keyword>
<keyword id="KW-1185">Reference proteome</keyword>
<keyword id="KW-0949">S-adenosyl-L-methionine</keyword>
<keyword id="KW-0808">Transferase</keyword>
<feature type="chain" id="PRO_0000111923" description="Protein-L-isoaspartate O-methyltransferase">
    <location>
        <begin position="1"/>
        <end position="219"/>
    </location>
</feature>
<feature type="active site" evidence="1">
    <location>
        <position position="65"/>
    </location>
</feature>
<feature type="helix" evidence="3">
    <location>
        <begin position="5"/>
        <end position="20"/>
    </location>
</feature>
<feature type="helix" evidence="3">
    <location>
        <begin position="27"/>
        <end position="35"/>
    </location>
</feature>
<feature type="helix" evidence="3">
    <location>
        <begin position="38"/>
        <end position="41"/>
    </location>
</feature>
<feature type="helix" evidence="3">
    <location>
        <begin position="44"/>
        <end position="49"/>
    </location>
</feature>
<feature type="strand" evidence="3">
    <location>
        <begin position="52"/>
        <end position="54"/>
    </location>
</feature>
<feature type="strand" evidence="4">
    <location>
        <begin position="56"/>
        <end position="58"/>
    </location>
</feature>
<feature type="helix" evidence="5">
    <location>
        <begin position="59"/>
        <end position="61"/>
    </location>
</feature>
<feature type="strand" evidence="4">
    <location>
        <begin position="62"/>
        <end position="64"/>
    </location>
</feature>
<feature type="helix" evidence="3">
    <location>
        <begin position="67"/>
        <end position="77"/>
    </location>
</feature>
<feature type="strand" evidence="3">
    <location>
        <begin position="85"/>
        <end position="88"/>
    </location>
</feature>
<feature type="helix" evidence="3">
    <location>
        <begin position="94"/>
        <end position="103"/>
    </location>
</feature>
<feature type="strand" evidence="3">
    <location>
        <begin position="107"/>
        <end position="112"/>
    </location>
</feature>
<feature type="helix" evidence="3">
    <location>
        <begin position="114"/>
        <end position="126"/>
    </location>
</feature>
<feature type="strand" evidence="3">
    <location>
        <begin position="131"/>
        <end position="137"/>
    </location>
</feature>
<feature type="helix" evidence="3">
    <location>
        <begin position="139"/>
        <end position="141"/>
    </location>
</feature>
<feature type="helix" evidence="3">
    <location>
        <begin position="144"/>
        <end position="146"/>
    </location>
</feature>
<feature type="strand" evidence="3">
    <location>
        <begin position="149"/>
        <end position="154"/>
    </location>
</feature>
<feature type="strand" evidence="3">
    <location>
        <begin position="156"/>
        <end position="160"/>
    </location>
</feature>
<feature type="helix" evidence="3">
    <location>
        <begin position="163"/>
        <end position="167"/>
    </location>
</feature>
<feature type="strand" evidence="3">
    <location>
        <begin position="169"/>
        <end position="179"/>
    </location>
</feature>
<feature type="strand" evidence="3">
    <location>
        <begin position="181"/>
        <end position="184"/>
    </location>
</feature>
<feature type="strand" evidence="3">
    <location>
        <begin position="186"/>
        <end position="194"/>
    </location>
</feature>
<feature type="strand" evidence="3">
    <location>
        <begin position="197"/>
        <end position="206"/>
    </location>
</feature>
<accession>Q8TZR3</accession>
<sequence length="219" mass="24617">MMDEKELYEKWMRTVEMLKAEGIIRSKEVERAFLKYPRYLFVEDKYKKYAHIDEPLPIPAGQTVSAPHMVAIMLEIANLKPGMNILEVGTGSGWNAALISEIVKTDVYTIERIPELVEFAKRNLERAGVKNVHVILGDGSKGFPPKAPYDVIIVTAGAPKIPEPLIEQLKIGGKLIIPVGSYHLWQELLEVRKTKDGIKIKNHGGVAFVPLIGEYGWKE</sequence>